<comment type="function">
    <text evidence="1">NAD-binding protein involved in the addition of a carboxymethylaminomethyl (cmnm) group at the wobble position (U34) of certain tRNAs, forming tRNA-cmnm(5)s(2)U34.</text>
</comment>
<comment type="cofactor">
    <cofactor evidence="1">
        <name>FAD</name>
        <dbReference type="ChEBI" id="CHEBI:57692"/>
    </cofactor>
</comment>
<comment type="subunit">
    <text evidence="1">Homodimer. Heterotetramer of two MnmE and two MnmG subunits.</text>
</comment>
<comment type="subcellular location">
    <subcellularLocation>
        <location evidence="1">Cytoplasm</location>
    </subcellularLocation>
</comment>
<comment type="similarity">
    <text evidence="1">Belongs to the MnmG family.</text>
</comment>
<comment type="sequence caution" evidence="3">
    <conflict type="erroneous initiation">
        <sequence resource="EMBL-CDS" id="ABJ61168"/>
    </conflict>
</comment>
<name>MNMG_LACGA</name>
<sequence>MKTYESNEYDVIVVGAGHAGVEAALAAARMGEKTLLLTINLDMVAFMPCNPSVGGPAKGTVVREIDALGGEMGKNIDATYIQMRMLNTGKGPAVRALRAQADKWQYHEHMKDTIENEPNLTLRQAVADELIVEDGACKGLITNTGAKYHAKSVVLTTGTAARGKIIIGELTYSSGPNNSLPSIKLPENLEKLGFKLRRFKTGTPPRVDGNTVDYSKTQEEPGDKEPRHFSYTSKDSDYLKDQMSCYMTYTNTVTHDIIRANLDRAPMFSGVIKGVGPRYCPSIEDKVVRFADKDRHQIFLEPEGRNTKEIYVGDFSTSMPEEVQLKMLHSVAGLEKAELMRPGYAIEYDVIEPWQLKHTLETKNIKHLFTAGQMNGTSGYEEAAGQGLIAGINAALSAQNKPGFTLQRDEAYIGVLIDDLVTKGTNEPYRLLTSRAEYRLLLRHDNADLRLTEKGHELGLISEERYAKFEAKKQAISRAMAAIKKVTIHPTDEVQEYLASVKQDRLNAGVSGADFLKRPRVTFDAVEKLSGQTLATDRYVKEQVEIALKYEGYIKKEKTLVDRLHRLESKKIPVDIDYNAIPSLATEARQKFEKIRPESIAQAERISGVNPADLAILTAYIQQGRIAKIKK</sequence>
<feature type="chain" id="PRO_0000345285" description="tRNA uridine 5-carboxymethylaminomethyl modification enzyme MnmG">
    <location>
        <begin position="1"/>
        <end position="631"/>
    </location>
</feature>
<feature type="region of interest" description="Disordered" evidence="2">
    <location>
        <begin position="203"/>
        <end position="232"/>
    </location>
</feature>
<feature type="compositionally biased region" description="Basic and acidic residues" evidence="2">
    <location>
        <begin position="216"/>
        <end position="232"/>
    </location>
</feature>
<feature type="binding site" evidence="1">
    <location>
        <begin position="15"/>
        <end position="20"/>
    </location>
    <ligand>
        <name>FAD</name>
        <dbReference type="ChEBI" id="CHEBI:57692"/>
    </ligand>
</feature>
<feature type="binding site" evidence="1">
    <location>
        <begin position="276"/>
        <end position="290"/>
    </location>
    <ligand>
        <name>NAD(+)</name>
        <dbReference type="ChEBI" id="CHEBI:57540"/>
    </ligand>
</feature>
<reference key="1">
    <citation type="journal article" date="2006" name="Proc. Natl. Acad. Sci. U.S.A.">
        <title>Comparative genomics of the lactic acid bacteria.</title>
        <authorList>
            <person name="Makarova K.S."/>
            <person name="Slesarev A."/>
            <person name="Wolf Y.I."/>
            <person name="Sorokin A."/>
            <person name="Mirkin B."/>
            <person name="Koonin E.V."/>
            <person name="Pavlov A."/>
            <person name="Pavlova N."/>
            <person name="Karamychev V."/>
            <person name="Polouchine N."/>
            <person name="Shakhova V."/>
            <person name="Grigoriev I."/>
            <person name="Lou Y."/>
            <person name="Rohksar D."/>
            <person name="Lucas S."/>
            <person name="Huang K."/>
            <person name="Goodstein D.M."/>
            <person name="Hawkins T."/>
            <person name="Plengvidhya V."/>
            <person name="Welker D."/>
            <person name="Hughes J."/>
            <person name="Goh Y."/>
            <person name="Benson A."/>
            <person name="Baldwin K."/>
            <person name="Lee J.-H."/>
            <person name="Diaz-Muniz I."/>
            <person name="Dosti B."/>
            <person name="Smeianov V."/>
            <person name="Wechter W."/>
            <person name="Barabote R."/>
            <person name="Lorca G."/>
            <person name="Altermann E."/>
            <person name="Barrangou R."/>
            <person name="Ganesan B."/>
            <person name="Xie Y."/>
            <person name="Rawsthorne H."/>
            <person name="Tamir D."/>
            <person name="Parker C."/>
            <person name="Breidt F."/>
            <person name="Broadbent J.R."/>
            <person name="Hutkins R."/>
            <person name="O'Sullivan D."/>
            <person name="Steele J."/>
            <person name="Unlu G."/>
            <person name="Saier M.H. Jr."/>
            <person name="Klaenhammer T."/>
            <person name="Richardson P."/>
            <person name="Kozyavkin S."/>
            <person name="Weimer B.C."/>
            <person name="Mills D.A."/>
        </authorList>
    </citation>
    <scope>NUCLEOTIDE SEQUENCE [LARGE SCALE GENOMIC DNA]</scope>
    <source>
        <strain>ATCC 33323 / DSM 20243 / BCRC 14619 / CIP 102991 / JCM 1131 / KCTC 3163 / NCIMB 11718 / NCTC 13722 / AM63</strain>
    </source>
</reference>
<protein>
    <recommendedName>
        <fullName evidence="1">tRNA uridine 5-carboxymethylaminomethyl modification enzyme MnmG</fullName>
    </recommendedName>
    <alternativeName>
        <fullName evidence="1">Glucose-inhibited division protein A</fullName>
    </alternativeName>
</protein>
<accession>Q040F4</accession>
<organism>
    <name type="scientific">Lactobacillus gasseri (strain ATCC 33323 / DSM 20243 / BCRC 14619 / CIP 102991 / JCM 1131 / KCTC 3163 / NCIMB 11718 / NCTC 13722 / AM63)</name>
    <dbReference type="NCBI Taxonomy" id="324831"/>
    <lineage>
        <taxon>Bacteria</taxon>
        <taxon>Bacillati</taxon>
        <taxon>Bacillota</taxon>
        <taxon>Bacilli</taxon>
        <taxon>Lactobacillales</taxon>
        <taxon>Lactobacillaceae</taxon>
        <taxon>Lactobacillus</taxon>
    </lineage>
</organism>
<dbReference type="EMBL" id="CP000413">
    <property type="protein sequence ID" value="ABJ61168.1"/>
    <property type="status" value="ALT_INIT"/>
    <property type="molecule type" value="Genomic_DNA"/>
</dbReference>
<dbReference type="RefSeq" id="WP_003651620.1">
    <property type="nucleotide sequence ID" value="NZ_WBMG01000006.1"/>
</dbReference>
<dbReference type="SMR" id="Q040F4"/>
<dbReference type="GeneID" id="29639564"/>
<dbReference type="KEGG" id="lga:LGAS_1894"/>
<dbReference type="HOGENOM" id="CLU_007831_2_2_9"/>
<dbReference type="BioCyc" id="LGAS324831:G1G6Y-1887-MONOMER"/>
<dbReference type="Proteomes" id="UP000000664">
    <property type="component" value="Chromosome"/>
</dbReference>
<dbReference type="GO" id="GO:0005829">
    <property type="term" value="C:cytosol"/>
    <property type="evidence" value="ECO:0007669"/>
    <property type="project" value="TreeGrafter"/>
</dbReference>
<dbReference type="GO" id="GO:0050660">
    <property type="term" value="F:flavin adenine dinucleotide binding"/>
    <property type="evidence" value="ECO:0007669"/>
    <property type="project" value="UniProtKB-UniRule"/>
</dbReference>
<dbReference type="GO" id="GO:0030488">
    <property type="term" value="P:tRNA methylation"/>
    <property type="evidence" value="ECO:0007669"/>
    <property type="project" value="TreeGrafter"/>
</dbReference>
<dbReference type="GO" id="GO:0002098">
    <property type="term" value="P:tRNA wobble uridine modification"/>
    <property type="evidence" value="ECO:0007669"/>
    <property type="project" value="InterPro"/>
</dbReference>
<dbReference type="FunFam" id="1.10.10.1800:FF:000001">
    <property type="entry name" value="tRNA uridine 5-carboxymethylaminomethyl modification enzyme MnmG"/>
    <property type="match status" value="1"/>
</dbReference>
<dbReference type="FunFam" id="1.10.150.570:FF:000001">
    <property type="entry name" value="tRNA uridine 5-carboxymethylaminomethyl modification enzyme MnmG"/>
    <property type="match status" value="1"/>
</dbReference>
<dbReference type="FunFam" id="3.50.50.60:FF:000002">
    <property type="entry name" value="tRNA uridine 5-carboxymethylaminomethyl modification enzyme MnmG"/>
    <property type="match status" value="1"/>
</dbReference>
<dbReference type="FunFam" id="3.50.50.60:FF:000063">
    <property type="entry name" value="tRNA uridine 5-carboxymethylaminomethyl modification enzyme MnmG"/>
    <property type="match status" value="1"/>
</dbReference>
<dbReference type="Gene3D" id="3.50.50.60">
    <property type="entry name" value="FAD/NAD(P)-binding domain"/>
    <property type="match status" value="2"/>
</dbReference>
<dbReference type="Gene3D" id="1.10.150.570">
    <property type="entry name" value="GidA associated domain, C-terminal subdomain"/>
    <property type="match status" value="1"/>
</dbReference>
<dbReference type="Gene3D" id="1.10.10.1800">
    <property type="entry name" value="tRNA uridine 5-carboxymethylaminomethyl modification enzyme MnmG/GidA"/>
    <property type="match status" value="1"/>
</dbReference>
<dbReference type="HAMAP" id="MF_00129">
    <property type="entry name" value="MnmG_GidA"/>
    <property type="match status" value="1"/>
</dbReference>
<dbReference type="InterPro" id="IPR036188">
    <property type="entry name" value="FAD/NAD-bd_sf"/>
</dbReference>
<dbReference type="InterPro" id="IPR049312">
    <property type="entry name" value="GIDA_C_N"/>
</dbReference>
<dbReference type="InterPro" id="IPR004416">
    <property type="entry name" value="MnmG"/>
</dbReference>
<dbReference type="InterPro" id="IPR002218">
    <property type="entry name" value="MnmG-rel"/>
</dbReference>
<dbReference type="InterPro" id="IPR020595">
    <property type="entry name" value="MnmG-rel_CS"/>
</dbReference>
<dbReference type="InterPro" id="IPR026904">
    <property type="entry name" value="MnmG_C"/>
</dbReference>
<dbReference type="InterPro" id="IPR047001">
    <property type="entry name" value="MnmG_C_subdom"/>
</dbReference>
<dbReference type="InterPro" id="IPR044920">
    <property type="entry name" value="MnmG_C_subdom_sf"/>
</dbReference>
<dbReference type="InterPro" id="IPR040131">
    <property type="entry name" value="MnmG_N"/>
</dbReference>
<dbReference type="NCBIfam" id="TIGR00136">
    <property type="entry name" value="mnmG_gidA"/>
    <property type="match status" value="1"/>
</dbReference>
<dbReference type="PANTHER" id="PTHR11806">
    <property type="entry name" value="GLUCOSE INHIBITED DIVISION PROTEIN A"/>
    <property type="match status" value="1"/>
</dbReference>
<dbReference type="PANTHER" id="PTHR11806:SF0">
    <property type="entry name" value="PROTEIN MTO1 HOMOLOG, MITOCHONDRIAL"/>
    <property type="match status" value="1"/>
</dbReference>
<dbReference type="Pfam" id="PF01134">
    <property type="entry name" value="GIDA"/>
    <property type="match status" value="1"/>
</dbReference>
<dbReference type="Pfam" id="PF21680">
    <property type="entry name" value="GIDA_C_1st"/>
    <property type="match status" value="1"/>
</dbReference>
<dbReference type="Pfam" id="PF13932">
    <property type="entry name" value="SAM_GIDA_C"/>
    <property type="match status" value="1"/>
</dbReference>
<dbReference type="PRINTS" id="PR00368">
    <property type="entry name" value="FADPNR"/>
</dbReference>
<dbReference type="PRINTS" id="PR00411">
    <property type="entry name" value="PNDRDTASEI"/>
</dbReference>
<dbReference type="SMART" id="SM01228">
    <property type="entry name" value="GIDA_assoc_3"/>
    <property type="match status" value="1"/>
</dbReference>
<dbReference type="SUPFAM" id="SSF51905">
    <property type="entry name" value="FAD/NAD(P)-binding domain"/>
    <property type="match status" value="1"/>
</dbReference>
<dbReference type="PROSITE" id="PS01280">
    <property type="entry name" value="GIDA_1"/>
    <property type="match status" value="1"/>
</dbReference>
<dbReference type="PROSITE" id="PS01281">
    <property type="entry name" value="GIDA_2"/>
    <property type="match status" value="1"/>
</dbReference>
<evidence type="ECO:0000255" key="1">
    <source>
        <dbReference type="HAMAP-Rule" id="MF_00129"/>
    </source>
</evidence>
<evidence type="ECO:0000256" key="2">
    <source>
        <dbReference type="SAM" id="MobiDB-lite"/>
    </source>
</evidence>
<evidence type="ECO:0000305" key="3"/>
<gene>
    <name evidence="1" type="primary">mnmG</name>
    <name evidence="1" type="synonym">gidA</name>
    <name type="ordered locus">LGAS_1894</name>
</gene>
<proteinExistence type="inferred from homology"/>
<keyword id="KW-0963">Cytoplasm</keyword>
<keyword id="KW-0274">FAD</keyword>
<keyword id="KW-0285">Flavoprotein</keyword>
<keyword id="KW-0520">NAD</keyword>
<keyword id="KW-0819">tRNA processing</keyword>